<organism>
    <name type="scientific">Enterobacter agglomerans</name>
    <name type="common">Erwinia herbicola</name>
    <name type="synonym">Pantoea agglomerans</name>
    <dbReference type="NCBI Taxonomy" id="549"/>
    <lineage>
        <taxon>Bacteria</taxon>
        <taxon>Pseudomonadati</taxon>
        <taxon>Pseudomonadota</taxon>
        <taxon>Gammaproteobacteria</taxon>
        <taxon>Enterobacterales</taxon>
        <taxon>Erwiniaceae</taxon>
        <taxon>Pantoea</taxon>
        <taxon>Pantoea agglomerans group</taxon>
    </lineage>
</organism>
<evidence type="ECO:0000250" key="1"/>
<evidence type="ECO:0000255" key="2"/>
<evidence type="ECO:0000305" key="3"/>
<keyword id="KW-0004">4Fe-4S</keyword>
<keyword id="KW-0067">ATP-binding</keyword>
<keyword id="KW-0408">Iron</keyword>
<keyword id="KW-0411">Iron-sulfur</keyword>
<keyword id="KW-0479">Metal-binding</keyword>
<keyword id="KW-0535">Nitrogen fixation</keyword>
<keyword id="KW-0547">Nucleotide-binding</keyword>
<keyword id="KW-0560">Oxidoreductase</keyword>
<keyword id="KW-0614">Plasmid</keyword>
<geneLocation type="plasmid">
    <name>pEA3</name>
</geneLocation>
<comment type="function">
    <text evidence="1">The key enzymatic reactions in nitrogen fixation are catalyzed by the nitrogenase complex, which has 2 components: the iron protein and the molybdenum-iron protein.</text>
</comment>
<comment type="catalytic activity">
    <reaction>
        <text>N2 + 8 reduced [2Fe-2S]-[ferredoxin] + 16 ATP + 16 H2O = H2 + 8 oxidized [2Fe-2S]-[ferredoxin] + 2 NH4(+) + 16 ADP + 16 phosphate + 6 H(+)</text>
        <dbReference type="Rhea" id="RHEA:21448"/>
        <dbReference type="Rhea" id="RHEA-COMP:10000"/>
        <dbReference type="Rhea" id="RHEA-COMP:10001"/>
        <dbReference type="ChEBI" id="CHEBI:15377"/>
        <dbReference type="ChEBI" id="CHEBI:15378"/>
        <dbReference type="ChEBI" id="CHEBI:17997"/>
        <dbReference type="ChEBI" id="CHEBI:18276"/>
        <dbReference type="ChEBI" id="CHEBI:28938"/>
        <dbReference type="ChEBI" id="CHEBI:30616"/>
        <dbReference type="ChEBI" id="CHEBI:33737"/>
        <dbReference type="ChEBI" id="CHEBI:33738"/>
        <dbReference type="ChEBI" id="CHEBI:43474"/>
        <dbReference type="ChEBI" id="CHEBI:456216"/>
        <dbReference type="EC" id="1.18.6.1"/>
    </reaction>
</comment>
<comment type="cofactor">
    <cofactor evidence="1">
        <name>[4Fe-4S] cluster</name>
        <dbReference type="ChEBI" id="CHEBI:49883"/>
    </cofactor>
    <text evidence="1">Binds 1 [4Fe-4S] cluster per dimer.</text>
</comment>
<comment type="subunit">
    <text evidence="1">Homodimer.</text>
</comment>
<comment type="similarity">
    <text evidence="3">Belongs to the NifH/BchL/ChlL family.</text>
</comment>
<feature type="chain" id="PRO_0000139506" description="Nitrogenase iron protein">
    <location>
        <begin position="1"/>
        <end position="36" status="greater than"/>
    </location>
</feature>
<feature type="binding site" evidence="2">
    <location>
        <begin position="10"/>
        <end position="17"/>
    </location>
    <ligand>
        <name>ATP</name>
        <dbReference type="ChEBI" id="CHEBI:30616"/>
    </ligand>
</feature>
<feature type="non-terminal residue">
    <location>
        <position position="36"/>
    </location>
</feature>
<dbReference type="EC" id="1.18.6.1"/>
<dbReference type="EMBL" id="M26932">
    <property type="protein sequence ID" value="AAA24805.1"/>
    <property type="molecule type" value="Genomic_DNA"/>
</dbReference>
<dbReference type="SMR" id="P26249"/>
<dbReference type="GO" id="GO:0051539">
    <property type="term" value="F:4 iron, 4 sulfur cluster binding"/>
    <property type="evidence" value="ECO:0007669"/>
    <property type="project" value="UniProtKB-KW"/>
</dbReference>
<dbReference type="GO" id="GO:0005524">
    <property type="term" value="F:ATP binding"/>
    <property type="evidence" value="ECO:0007669"/>
    <property type="project" value="UniProtKB-KW"/>
</dbReference>
<dbReference type="GO" id="GO:0046872">
    <property type="term" value="F:metal ion binding"/>
    <property type="evidence" value="ECO:0007669"/>
    <property type="project" value="UniProtKB-KW"/>
</dbReference>
<dbReference type="GO" id="GO:0016163">
    <property type="term" value="F:nitrogenase activity"/>
    <property type="evidence" value="ECO:0007669"/>
    <property type="project" value="UniProtKB-EC"/>
</dbReference>
<dbReference type="GO" id="GO:0009399">
    <property type="term" value="P:nitrogen fixation"/>
    <property type="evidence" value="ECO:0007669"/>
    <property type="project" value="UniProtKB-KW"/>
</dbReference>
<dbReference type="Gene3D" id="3.40.50.300">
    <property type="entry name" value="P-loop containing nucleotide triphosphate hydrolases"/>
    <property type="match status" value="1"/>
</dbReference>
<dbReference type="InterPro" id="IPR000392">
    <property type="entry name" value="NifH/frxC"/>
</dbReference>
<dbReference type="InterPro" id="IPR027417">
    <property type="entry name" value="P-loop_NTPase"/>
</dbReference>
<dbReference type="PANTHER" id="PTHR42864">
    <property type="entry name" value="LIGHT-INDEPENDENT PROTOCHLOROPHYLLIDE REDUCTASE IRON-SULFUR ATP-BINDING PROTEIN"/>
    <property type="match status" value="1"/>
</dbReference>
<dbReference type="PANTHER" id="PTHR42864:SF2">
    <property type="entry name" value="LIGHT-INDEPENDENT PROTOCHLOROPHYLLIDE REDUCTASE IRON-SULFUR ATP-BINDING PROTEIN"/>
    <property type="match status" value="1"/>
</dbReference>
<dbReference type="Pfam" id="PF00142">
    <property type="entry name" value="Fer4_NifH"/>
    <property type="match status" value="1"/>
</dbReference>
<dbReference type="PRINTS" id="PR00091">
    <property type="entry name" value="NITROGNASEII"/>
</dbReference>
<dbReference type="SUPFAM" id="SSF52540">
    <property type="entry name" value="P-loop containing nucleoside triphosphate hydrolases"/>
    <property type="match status" value="1"/>
</dbReference>
<sequence>MAMRQCAIYGKGGIGKSTTTQNLVAALAEMNKKVMI</sequence>
<reference key="1">
    <citation type="journal article" date="1989" name="Gene">
        <title>Identification and characterization of the nifH and nifJ promoter regions located on the nif-plasmid pEA3 of Enterobacter agglomerans 333.</title>
        <authorList>
            <person name="Kreutzer R."/>
            <person name="Singh M."/>
            <person name="Klingmueller W."/>
        </authorList>
    </citation>
    <scope>NUCLEOTIDE SEQUENCE [GENOMIC DNA]</scope>
    <source>
        <strain>333</strain>
    </source>
</reference>
<protein>
    <recommendedName>
        <fullName>Nitrogenase iron protein</fullName>
        <ecNumber>1.18.6.1</ecNumber>
    </recommendedName>
    <alternativeName>
        <fullName>Nitrogenase Fe protein</fullName>
    </alternativeName>
    <alternativeName>
        <fullName>Nitrogenase component II</fullName>
    </alternativeName>
    <alternativeName>
        <fullName>Nitrogenase reductase</fullName>
    </alternativeName>
</protein>
<name>NIFH_ENTAG</name>
<gene>
    <name type="primary">nifH</name>
</gene>
<proteinExistence type="inferred from homology"/>
<accession>P26249</accession>